<comment type="function">
    <text evidence="1">NQR complex catalyzes the reduction of ubiquinone-1 to ubiquinol by two successive reactions, coupled with the transport of Na(+) ions from the cytoplasm to the periplasm. NqrA to NqrE are probably involved in the second step, the conversion of ubisemiquinone to ubiquinol.</text>
</comment>
<comment type="catalytic activity">
    <reaction evidence="1">
        <text>a ubiquinone + n Na(+)(in) + NADH + H(+) = a ubiquinol + n Na(+)(out) + NAD(+)</text>
        <dbReference type="Rhea" id="RHEA:47748"/>
        <dbReference type="Rhea" id="RHEA-COMP:9565"/>
        <dbReference type="Rhea" id="RHEA-COMP:9566"/>
        <dbReference type="ChEBI" id="CHEBI:15378"/>
        <dbReference type="ChEBI" id="CHEBI:16389"/>
        <dbReference type="ChEBI" id="CHEBI:17976"/>
        <dbReference type="ChEBI" id="CHEBI:29101"/>
        <dbReference type="ChEBI" id="CHEBI:57540"/>
        <dbReference type="ChEBI" id="CHEBI:57945"/>
        <dbReference type="EC" id="7.2.1.1"/>
    </reaction>
</comment>
<comment type="subunit">
    <text evidence="1">Composed of six subunits; NqrA, NqrB, NqrC, NqrD, NqrE and NqrF.</text>
</comment>
<comment type="subcellular location">
    <subcellularLocation>
        <location evidence="1">Cell inner membrane</location>
        <topology evidence="1">Multi-pass membrane protein</topology>
    </subcellularLocation>
</comment>
<comment type="similarity">
    <text evidence="1">Belongs to the NqrDE/RnfAE family.</text>
</comment>
<proteinExistence type="inferred from homology"/>
<dbReference type="EC" id="7.2.1.1" evidence="1"/>
<dbReference type="EMBL" id="CP000647">
    <property type="protein sequence ID" value="ABR75696.1"/>
    <property type="molecule type" value="Genomic_DNA"/>
</dbReference>
<dbReference type="RefSeq" id="WP_011977687.1">
    <property type="nucleotide sequence ID" value="NC_009648.1"/>
</dbReference>
<dbReference type="SMR" id="A6T525"/>
<dbReference type="STRING" id="272620.KPN_00243"/>
<dbReference type="PaxDb" id="272620-KPN_00243"/>
<dbReference type="EnsemblBacteria" id="ABR75696">
    <property type="protein sequence ID" value="ABR75696"/>
    <property type="gene ID" value="KPN_00243"/>
</dbReference>
<dbReference type="KEGG" id="kpn:KPN_00243"/>
<dbReference type="HOGENOM" id="CLU_095255_0_0_6"/>
<dbReference type="Proteomes" id="UP000000265">
    <property type="component" value="Chromosome"/>
</dbReference>
<dbReference type="GO" id="GO:0009276">
    <property type="term" value="C:Gram-negative-bacterium-type cell wall"/>
    <property type="evidence" value="ECO:0007669"/>
    <property type="project" value="InterPro"/>
</dbReference>
<dbReference type="GO" id="GO:0005886">
    <property type="term" value="C:plasma membrane"/>
    <property type="evidence" value="ECO:0007669"/>
    <property type="project" value="UniProtKB-SubCell"/>
</dbReference>
<dbReference type="GO" id="GO:0016655">
    <property type="term" value="F:oxidoreductase activity, acting on NAD(P)H, quinone or similar compound as acceptor"/>
    <property type="evidence" value="ECO:0007669"/>
    <property type="project" value="UniProtKB-UniRule"/>
</dbReference>
<dbReference type="GO" id="GO:0022904">
    <property type="term" value="P:respiratory electron transport chain"/>
    <property type="evidence" value="ECO:0007669"/>
    <property type="project" value="InterPro"/>
</dbReference>
<dbReference type="GO" id="GO:0006814">
    <property type="term" value="P:sodium ion transport"/>
    <property type="evidence" value="ECO:0007669"/>
    <property type="project" value="UniProtKB-UniRule"/>
</dbReference>
<dbReference type="HAMAP" id="MF_00429">
    <property type="entry name" value="NqrE"/>
    <property type="match status" value="1"/>
</dbReference>
<dbReference type="InterPro" id="IPR003667">
    <property type="entry name" value="NqrDE/RnfAE"/>
</dbReference>
<dbReference type="InterPro" id="IPR050133">
    <property type="entry name" value="NqrDE/RnfAE_oxidrdctase"/>
</dbReference>
<dbReference type="InterPro" id="IPR010967">
    <property type="entry name" value="NqrE"/>
</dbReference>
<dbReference type="NCBIfam" id="TIGR01940">
    <property type="entry name" value="nqrE"/>
    <property type="match status" value="1"/>
</dbReference>
<dbReference type="PANTHER" id="PTHR30335">
    <property type="entry name" value="INTEGRAL MEMBRANE PROTEIN OF SOXR-REDUCING COMPLEX"/>
    <property type="match status" value="1"/>
</dbReference>
<dbReference type="PANTHER" id="PTHR30335:SF1">
    <property type="entry name" value="NA(+)-TRANSLOCATING NADH-QUINONE REDUCTASE SUBUNIT E"/>
    <property type="match status" value="1"/>
</dbReference>
<dbReference type="Pfam" id="PF02508">
    <property type="entry name" value="Rnf-Nqr"/>
    <property type="match status" value="1"/>
</dbReference>
<dbReference type="PIRSF" id="PIRSF006102">
    <property type="entry name" value="NQR_DE"/>
    <property type="match status" value="1"/>
</dbReference>
<keyword id="KW-0997">Cell inner membrane</keyword>
<keyword id="KW-1003">Cell membrane</keyword>
<keyword id="KW-0406">Ion transport</keyword>
<keyword id="KW-0472">Membrane</keyword>
<keyword id="KW-0520">NAD</keyword>
<keyword id="KW-0915">Sodium</keyword>
<keyword id="KW-0739">Sodium transport</keyword>
<keyword id="KW-1278">Translocase</keyword>
<keyword id="KW-0812">Transmembrane</keyword>
<keyword id="KW-1133">Transmembrane helix</keyword>
<keyword id="KW-0813">Transport</keyword>
<keyword id="KW-0830">Ubiquinone</keyword>
<gene>
    <name evidence="1" type="primary">nqrE</name>
    <name type="ordered locus">KPN78578_02350</name>
    <name type="ORF">KPN_00243</name>
</gene>
<feature type="chain" id="PRO_1000060197" description="Na(+)-translocating NADH-quinone reductase subunit E">
    <location>
        <begin position="1"/>
        <end position="198"/>
    </location>
</feature>
<feature type="transmembrane region" description="Helical" evidence="1">
    <location>
        <begin position="11"/>
        <end position="31"/>
    </location>
</feature>
<feature type="transmembrane region" description="Helical" evidence="1">
    <location>
        <begin position="35"/>
        <end position="55"/>
    </location>
</feature>
<feature type="transmembrane region" description="Helical" evidence="1">
    <location>
        <begin position="77"/>
        <end position="97"/>
    </location>
</feature>
<feature type="transmembrane region" description="Helical" evidence="1">
    <location>
        <begin position="110"/>
        <end position="130"/>
    </location>
</feature>
<feature type="transmembrane region" description="Helical" evidence="1">
    <location>
        <begin position="140"/>
        <end position="160"/>
    </location>
</feature>
<feature type="transmembrane region" description="Helical" evidence="1">
    <location>
        <begin position="176"/>
        <end position="196"/>
    </location>
</feature>
<protein>
    <recommendedName>
        <fullName evidence="1">Na(+)-translocating NADH-quinone reductase subunit E</fullName>
        <shortName evidence="1">Na(+)-NQR subunit E</shortName>
        <shortName evidence="1">Na(+)-translocating NQR subunit E</shortName>
        <ecNumber evidence="1">7.2.1.1</ecNumber>
    </recommendedName>
    <alternativeName>
        <fullName evidence="1">NQR complex subunit E</fullName>
    </alternativeName>
    <alternativeName>
        <fullName evidence="1">NQR-1 subunit E</fullName>
    </alternativeName>
</protein>
<accession>A6T525</accession>
<evidence type="ECO:0000255" key="1">
    <source>
        <dbReference type="HAMAP-Rule" id="MF_00429"/>
    </source>
</evidence>
<organism>
    <name type="scientific">Klebsiella pneumoniae subsp. pneumoniae (strain ATCC 700721 / MGH 78578)</name>
    <dbReference type="NCBI Taxonomy" id="272620"/>
    <lineage>
        <taxon>Bacteria</taxon>
        <taxon>Pseudomonadati</taxon>
        <taxon>Pseudomonadota</taxon>
        <taxon>Gammaproteobacteria</taxon>
        <taxon>Enterobacterales</taxon>
        <taxon>Enterobacteriaceae</taxon>
        <taxon>Klebsiella/Raoultella group</taxon>
        <taxon>Klebsiella</taxon>
        <taxon>Klebsiella pneumoniae complex</taxon>
    </lineage>
</organism>
<reference key="1">
    <citation type="submission" date="2006-09" db="EMBL/GenBank/DDBJ databases">
        <authorList>
            <consortium name="The Klebsiella pneumonia Genome Sequencing Project"/>
            <person name="McClelland M."/>
            <person name="Sanderson E.K."/>
            <person name="Spieth J."/>
            <person name="Clifton W.S."/>
            <person name="Latreille P."/>
            <person name="Sabo A."/>
            <person name="Pepin K."/>
            <person name="Bhonagiri V."/>
            <person name="Porwollik S."/>
            <person name="Ali J."/>
            <person name="Wilson R.K."/>
        </authorList>
    </citation>
    <scope>NUCLEOTIDE SEQUENCE [LARGE SCALE GENOMIC DNA]</scope>
    <source>
        <strain>ATCC 700721 / MGH 78578</strain>
    </source>
</reference>
<name>NQRE_KLEP7</name>
<sequence>MAHYISLFVRAVFVENMALAFFLGMCTFLAVSKKVSTASGLGVAVTVVLGLAVPINNLVYNLVLRDGALVEGVDLSFLNFITFIGVIAALVQILEMILDKYFPALYNALGIFLPLIAVNCAIFGGVSFMVQRDYNFPESIVYGFGSGIGWMLAIVAMAGIREKMKYANVPAGLRGLGITFITTGLMALGFMSFSGVQL</sequence>